<dbReference type="EC" id="2.7.3.3"/>
<dbReference type="EMBL" id="FO081399">
    <property type="protein sequence ID" value="CCD71355.1"/>
    <property type="molecule type" value="Genomic_DNA"/>
</dbReference>
<dbReference type="EMBL" id="FO081399">
    <property type="protein sequence ID" value="CCD71356.1"/>
    <property type="molecule type" value="Genomic_DNA"/>
</dbReference>
<dbReference type="PIR" id="T34272">
    <property type="entry name" value="T34272"/>
</dbReference>
<dbReference type="RefSeq" id="NP_001367861.1">
    <molecule id="Q10454-1"/>
    <property type="nucleotide sequence ID" value="NM_001381019.3"/>
</dbReference>
<dbReference type="RefSeq" id="NP_001367862.1">
    <molecule id="Q10454-2"/>
    <property type="nucleotide sequence ID" value="NM_001381020.1"/>
</dbReference>
<dbReference type="RefSeq" id="NP_509217.2">
    <property type="nucleotide sequence ID" value="NM_076816.2"/>
</dbReference>
<dbReference type="RefSeq" id="NP_872253.1">
    <property type="nucleotide sequence ID" value="NM_182453.5"/>
</dbReference>
<dbReference type="SMR" id="Q10454"/>
<dbReference type="BioGRID" id="45911">
    <property type="interactions" value="72"/>
</dbReference>
<dbReference type="DIP" id="DIP-26821N"/>
<dbReference type="FunCoup" id="Q10454">
    <property type="interactions" value="53"/>
</dbReference>
<dbReference type="IntAct" id="Q10454">
    <property type="interactions" value="1"/>
</dbReference>
<dbReference type="STRING" id="6239.F46H5.3a.2"/>
<dbReference type="iPTMnet" id="Q10454"/>
<dbReference type="PaxDb" id="6239-F46H5.3a.3"/>
<dbReference type="PeptideAtlas" id="Q10454"/>
<dbReference type="EnsemblMetazoa" id="F46H5.3a.1">
    <molecule id="Q10454-1"/>
    <property type="protein sequence ID" value="F46H5.3a.1"/>
    <property type="gene ID" value="WBGene00018519"/>
</dbReference>
<dbReference type="EnsemblMetazoa" id="F46H5.3b.1">
    <molecule id="Q10454-2"/>
    <property type="protein sequence ID" value="F46H5.3b.1"/>
    <property type="gene ID" value="WBGene00018519"/>
</dbReference>
<dbReference type="GeneID" id="180986"/>
<dbReference type="UCSC" id="F46H5.3b.2">
    <molecule id="Q10454-1"/>
    <property type="organism name" value="c. elegans"/>
</dbReference>
<dbReference type="AGR" id="WB:WBGene00018519"/>
<dbReference type="WormBase" id="F46H5.3a">
    <molecule id="Q10454-1"/>
    <property type="protein sequence ID" value="CE37112"/>
    <property type="gene ID" value="WBGene00018519"/>
</dbReference>
<dbReference type="WormBase" id="F46H5.3b">
    <molecule id="Q10454-2"/>
    <property type="protein sequence ID" value="CE33098"/>
    <property type="gene ID" value="WBGene00018519"/>
</dbReference>
<dbReference type="eggNOG" id="KOG3581">
    <property type="taxonomic scope" value="Eukaryota"/>
</dbReference>
<dbReference type="GeneTree" id="ENSGT00950000182772"/>
<dbReference type="InParanoid" id="Q10454"/>
<dbReference type="OMA" id="GYAKLQA"/>
<dbReference type="OrthoDB" id="430219at2759"/>
<dbReference type="PhylomeDB" id="Q10454"/>
<dbReference type="BRENDA" id="2.7.3.3">
    <property type="organism ID" value="1045"/>
</dbReference>
<dbReference type="PRO" id="PR:Q10454"/>
<dbReference type="Proteomes" id="UP000001940">
    <property type="component" value="Chromosome X"/>
</dbReference>
<dbReference type="Bgee" id="WBGene00018519">
    <property type="expression patterns" value="Expressed in larva and 4 other cell types or tissues"/>
</dbReference>
<dbReference type="GO" id="GO:0005615">
    <property type="term" value="C:extracellular space"/>
    <property type="evidence" value="ECO:0000318"/>
    <property type="project" value="GO_Central"/>
</dbReference>
<dbReference type="GO" id="GO:0004054">
    <property type="term" value="F:arginine kinase activity"/>
    <property type="evidence" value="ECO:0007669"/>
    <property type="project" value="UniProtKB-EC"/>
</dbReference>
<dbReference type="GO" id="GO:0005524">
    <property type="term" value="F:ATP binding"/>
    <property type="evidence" value="ECO:0007669"/>
    <property type="project" value="UniProtKB-KW"/>
</dbReference>
<dbReference type="GO" id="GO:0004111">
    <property type="term" value="F:creatine kinase activity"/>
    <property type="evidence" value="ECO:0007669"/>
    <property type="project" value="InterPro"/>
</dbReference>
<dbReference type="GO" id="GO:0016301">
    <property type="term" value="F:kinase activity"/>
    <property type="evidence" value="ECO:0000318"/>
    <property type="project" value="GO_Central"/>
</dbReference>
<dbReference type="GO" id="GO:0046314">
    <property type="term" value="P:phosphocreatine biosynthetic process"/>
    <property type="evidence" value="ECO:0007669"/>
    <property type="project" value="InterPro"/>
</dbReference>
<dbReference type="CDD" id="cd07932">
    <property type="entry name" value="arginine_kinase_like"/>
    <property type="match status" value="1"/>
</dbReference>
<dbReference type="FunFam" id="3.30.590.10:FF:000006">
    <property type="entry name" value="Arginine kinase 1"/>
    <property type="match status" value="1"/>
</dbReference>
<dbReference type="FunFam" id="1.10.135.10:FF:000003">
    <property type="entry name" value="Three-domain arginine kinase"/>
    <property type="match status" value="1"/>
</dbReference>
<dbReference type="Gene3D" id="1.10.135.10">
    <property type="entry name" value="ATP:guanido phosphotransferase, N-terminal domain"/>
    <property type="match status" value="1"/>
</dbReference>
<dbReference type="Gene3D" id="3.30.590.10">
    <property type="entry name" value="Glutamine synthetase/guanido kinase, catalytic domain"/>
    <property type="match status" value="1"/>
</dbReference>
<dbReference type="InterPro" id="IPR000749">
    <property type="entry name" value="ATP-guanido_PTrfase"/>
</dbReference>
<dbReference type="InterPro" id="IPR022415">
    <property type="entry name" value="ATP-guanido_PTrfase_AS"/>
</dbReference>
<dbReference type="InterPro" id="IPR022414">
    <property type="entry name" value="ATP-guanido_PTrfase_cat"/>
</dbReference>
<dbReference type="InterPro" id="IPR022413">
    <property type="entry name" value="ATP-guanido_PTrfase_N"/>
</dbReference>
<dbReference type="InterPro" id="IPR036802">
    <property type="entry name" value="ATP-guanido_PTrfase_N_sf"/>
</dbReference>
<dbReference type="InterPro" id="IPR014746">
    <property type="entry name" value="Gln_synth/guanido_kin_cat_dom"/>
</dbReference>
<dbReference type="PANTHER" id="PTHR11547:SF38">
    <property type="entry name" value="ARGININE KINASE 1-RELATED"/>
    <property type="match status" value="1"/>
</dbReference>
<dbReference type="PANTHER" id="PTHR11547">
    <property type="entry name" value="ARGININE OR CREATINE KINASE"/>
    <property type="match status" value="1"/>
</dbReference>
<dbReference type="Pfam" id="PF00217">
    <property type="entry name" value="ATP-gua_Ptrans"/>
    <property type="match status" value="1"/>
</dbReference>
<dbReference type="Pfam" id="PF02807">
    <property type="entry name" value="ATP-gua_PtransN"/>
    <property type="match status" value="1"/>
</dbReference>
<dbReference type="SUPFAM" id="SSF55931">
    <property type="entry name" value="Glutamine synthetase/guanido kinase"/>
    <property type="match status" value="1"/>
</dbReference>
<dbReference type="SUPFAM" id="SSF48034">
    <property type="entry name" value="Guanido kinase N-terminal domain"/>
    <property type="match status" value="1"/>
</dbReference>
<dbReference type="PROSITE" id="PS00112">
    <property type="entry name" value="PHOSPHAGEN_KINASE"/>
    <property type="match status" value="1"/>
</dbReference>
<dbReference type="PROSITE" id="PS51510">
    <property type="entry name" value="PHOSPHAGEN_KINASE_C"/>
    <property type="match status" value="1"/>
</dbReference>
<dbReference type="PROSITE" id="PS51509">
    <property type="entry name" value="PHOSPHAGEN_KINASE_N"/>
    <property type="match status" value="1"/>
</dbReference>
<keyword id="KW-0025">Alternative splicing</keyword>
<keyword id="KW-0067">ATP-binding</keyword>
<keyword id="KW-0418">Kinase</keyword>
<keyword id="KW-0547">Nucleotide-binding</keyword>
<keyword id="KW-1185">Reference proteome</keyword>
<keyword id="KW-0808">Transferase</keyword>
<organism>
    <name type="scientific">Caenorhabditis elegans</name>
    <dbReference type="NCBI Taxonomy" id="6239"/>
    <lineage>
        <taxon>Eukaryota</taxon>
        <taxon>Metazoa</taxon>
        <taxon>Ecdysozoa</taxon>
        <taxon>Nematoda</taxon>
        <taxon>Chromadorea</taxon>
        <taxon>Rhabditida</taxon>
        <taxon>Rhabditina</taxon>
        <taxon>Rhabditomorpha</taxon>
        <taxon>Rhabditoidea</taxon>
        <taxon>Rhabditidae</taxon>
        <taxon>Peloderinae</taxon>
        <taxon>Caenorhabditis</taxon>
    </lineage>
</organism>
<accession>Q10454</accession>
<accession>Q86NG9</accession>
<name>KARG1_CAEEL</name>
<feature type="chain" id="PRO_0000211988" description="Probable arginine kinase F46H5.3">
    <location>
        <begin position="1"/>
        <end position="396"/>
    </location>
</feature>
<feature type="domain" description="Phosphagen kinase N-terminal" evidence="2">
    <location>
        <begin position="47"/>
        <end position="129"/>
    </location>
</feature>
<feature type="domain" description="Phosphagen kinase C-terminal" evidence="3">
    <location>
        <begin position="159"/>
        <end position="396"/>
    </location>
</feature>
<feature type="binding site" evidence="1">
    <location>
        <begin position="102"/>
        <end position="106"/>
    </location>
    <ligand>
        <name>substrate</name>
    </ligand>
</feature>
<feature type="binding site" evidence="3">
    <location>
        <begin position="162"/>
        <end position="166"/>
    </location>
    <ligand>
        <name>ATP</name>
        <dbReference type="ChEBI" id="CHEBI:30616"/>
    </ligand>
</feature>
<feature type="binding site" evidence="3">
    <location>
        <position position="226"/>
    </location>
    <ligand>
        <name>ATP</name>
        <dbReference type="ChEBI" id="CHEBI:30616"/>
    </ligand>
</feature>
<feature type="binding site" evidence="1">
    <location>
        <position position="266"/>
    </location>
    <ligand>
        <name>substrate</name>
    </ligand>
</feature>
<feature type="binding site" evidence="3">
    <location>
        <position position="270"/>
    </location>
    <ligand>
        <name>ATP</name>
        <dbReference type="ChEBI" id="CHEBI:30616"/>
    </ligand>
</feature>
<feature type="binding site" evidence="1">
    <location>
        <position position="312"/>
    </location>
    <ligand>
        <name>substrate</name>
    </ligand>
</feature>
<feature type="binding site" evidence="3">
    <location>
        <begin position="321"/>
        <end position="325"/>
    </location>
    <ligand>
        <name>ATP</name>
        <dbReference type="ChEBI" id="CHEBI:30616"/>
    </ligand>
</feature>
<feature type="binding site" evidence="3">
    <location>
        <begin position="349"/>
        <end position="354"/>
    </location>
    <ligand>
        <name>ATP</name>
        <dbReference type="ChEBI" id="CHEBI:30616"/>
    </ligand>
</feature>
<feature type="binding site" evidence="1">
    <location>
        <position position="354"/>
    </location>
    <ligand>
        <name>substrate</name>
    </ligand>
</feature>
<feature type="binding site" evidence="3">
    <location>
        <position position="364"/>
    </location>
    <ligand>
        <name>ATP</name>
        <dbReference type="ChEBI" id="CHEBI:30616"/>
    </ligand>
</feature>
<feature type="splice variant" id="VSP_012750" description="In isoform b." evidence="4">
    <location>
        <begin position="1"/>
        <end position="37"/>
    </location>
</feature>
<reference key="1">
    <citation type="journal article" date="1998" name="Science">
        <title>Genome sequence of the nematode C. elegans: a platform for investigating biology.</title>
        <authorList>
            <consortium name="The C. elegans sequencing consortium"/>
        </authorList>
    </citation>
    <scope>NUCLEOTIDE SEQUENCE [LARGE SCALE GENOMIC DNA]</scope>
    <scope>ALTERNATIVE SPLICING</scope>
    <source>
        <strain>Bristol N2</strain>
    </source>
</reference>
<comment type="catalytic activity">
    <reaction>
        <text>L-arginine + ATP = N(omega)-phospho-L-arginine + ADP + H(+)</text>
        <dbReference type="Rhea" id="RHEA:22940"/>
        <dbReference type="ChEBI" id="CHEBI:15378"/>
        <dbReference type="ChEBI" id="CHEBI:30616"/>
        <dbReference type="ChEBI" id="CHEBI:32682"/>
        <dbReference type="ChEBI" id="CHEBI:58477"/>
        <dbReference type="ChEBI" id="CHEBI:456216"/>
        <dbReference type="EC" id="2.7.3.3"/>
    </reaction>
</comment>
<comment type="alternative products">
    <event type="alternative splicing"/>
    <isoform>
        <id>Q10454-1</id>
        <name>a</name>
        <sequence type="displayed"/>
    </isoform>
    <isoform>
        <id>Q10454-2</id>
        <name>b</name>
        <sequence type="described" ref="VSP_012750"/>
    </isoform>
</comment>
<comment type="similarity">
    <text evidence="2 3">Belongs to the ATP:guanido phosphotransferase family.</text>
</comment>
<evidence type="ECO:0000250" key="1"/>
<evidence type="ECO:0000255" key="2">
    <source>
        <dbReference type="PROSITE-ProRule" id="PRU00842"/>
    </source>
</evidence>
<evidence type="ECO:0000255" key="3">
    <source>
        <dbReference type="PROSITE-ProRule" id="PRU00843"/>
    </source>
</evidence>
<evidence type="ECO:0000305" key="4"/>
<proteinExistence type="inferred from homology"/>
<gene>
    <name type="ORF">F46H5.3</name>
</gene>
<protein>
    <recommendedName>
        <fullName>Probable arginine kinase F46H5.3</fullName>
        <shortName>AK</shortName>
        <ecNumber>2.7.3.3</ecNumber>
    </recommendedName>
</protein>
<sequence length="396" mass="44168">MLHRCSRVLSQFLGRGNSKMLREAYSTSLHCVQAQEGMSVSPDVIAKIEEGYAKLQAAPECHSLLKKYLTKEVVDQLKDKKTKLGANLLDVIQSGVANLDSGVGVYAPDAEAYTLFKPLFDPLIQDYHNGFAPDAKQPNTDLGEGKTSALVDLDPEGKFINSTRIRCGRSLQGYPFNPCLSEANYLEMESKVKAIFDNITDPELAGKYFPLDGMTKEIQDQLIKDHFLFKEGDRFLQAANACRYWPKGRGIFHNNQKTFLIWCNEEDHLRIISMQEGGNVGQVLERLIKGVKTIEKQAPFSRDDRLGWLTFCPSNLGTTVRASVHIRLPKISAKPDFKSICDGLKLQIRGIHGEHSESEGGVYDISNKARLGLTEFEAVKQMYDGIAHLIALEKAA</sequence>